<name>RL5_MESFL</name>
<dbReference type="EMBL" id="AE017263">
    <property type="protein sequence ID" value="AAT75491.1"/>
    <property type="molecule type" value="Genomic_DNA"/>
</dbReference>
<dbReference type="RefSeq" id="WP_011183032.1">
    <property type="nucleotide sequence ID" value="NC_006055.1"/>
</dbReference>
<dbReference type="RefSeq" id="YP_053375.1">
    <property type="nucleotide sequence ID" value="NC_006055.1"/>
</dbReference>
<dbReference type="SMR" id="Q6F1Y2"/>
<dbReference type="STRING" id="265311.Mfl135"/>
<dbReference type="PaxDb" id="265311-Mfl135"/>
<dbReference type="EnsemblBacteria" id="AAT75491">
    <property type="protein sequence ID" value="AAT75491"/>
    <property type="gene ID" value="Mfl135"/>
</dbReference>
<dbReference type="GeneID" id="2898209"/>
<dbReference type="KEGG" id="mfl:Mfl135"/>
<dbReference type="PATRIC" id="fig|265311.5.peg.136"/>
<dbReference type="eggNOG" id="COG0094">
    <property type="taxonomic scope" value="Bacteria"/>
</dbReference>
<dbReference type="HOGENOM" id="CLU_061015_2_1_14"/>
<dbReference type="OrthoDB" id="9806626at2"/>
<dbReference type="Proteomes" id="UP000006647">
    <property type="component" value="Chromosome"/>
</dbReference>
<dbReference type="GO" id="GO:1990904">
    <property type="term" value="C:ribonucleoprotein complex"/>
    <property type="evidence" value="ECO:0007669"/>
    <property type="project" value="UniProtKB-KW"/>
</dbReference>
<dbReference type="GO" id="GO:0005840">
    <property type="term" value="C:ribosome"/>
    <property type="evidence" value="ECO:0007669"/>
    <property type="project" value="UniProtKB-KW"/>
</dbReference>
<dbReference type="GO" id="GO:0019843">
    <property type="term" value="F:rRNA binding"/>
    <property type="evidence" value="ECO:0007669"/>
    <property type="project" value="UniProtKB-UniRule"/>
</dbReference>
<dbReference type="GO" id="GO:0003735">
    <property type="term" value="F:structural constituent of ribosome"/>
    <property type="evidence" value="ECO:0007669"/>
    <property type="project" value="InterPro"/>
</dbReference>
<dbReference type="GO" id="GO:0000049">
    <property type="term" value="F:tRNA binding"/>
    <property type="evidence" value="ECO:0007669"/>
    <property type="project" value="UniProtKB-UniRule"/>
</dbReference>
<dbReference type="GO" id="GO:0006412">
    <property type="term" value="P:translation"/>
    <property type="evidence" value="ECO:0007669"/>
    <property type="project" value="UniProtKB-UniRule"/>
</dbReference>
<dbReference type="FunFam" id="3.30.1440.10:FF:000001">
    <property type="entry name" value="50S ribosomal protein L5"/>
    <property type="match status" value="1"/>
</dbReference>
<dbReference type="Gene3D" id="3.30.1440.10">
    <property type="match status" value="1"/>
</dbReference>
<dbReference type="HAMAP" id="MF_01333_B">
    <property type="entry name" value="Ribosomal_uL5_B"/>
    <property type="match status" value="1"/>
</dbReference>
<dbReference type="InterPro" id="IPR002132">
    <property type="entry name" value="Ribosomal_uL5"/>
</dbReference>
<dbReference type="InterPro" id="IPR020930">
    <property type="entry name" value="Ribosomal_uL5_bac-type"/>
</dbReference>
<dbReference type="InterPro" id="IPR031309">
    <property type="entry name" value="Ribosomal_uL5_C"/>
</dbReference>
<dbReference type="InterPro" id="IPR020929">
    <property type="entry name" value="Ribosomal_uL5_CS"/>
</dbReference>
<dbReference type="InterPro" id="IPR022803">
    <property type="entry name" value="Ribosomal_uL5_dom_sf"/>
</dbReference>
<dbReference type="InterPro" id="IPR031310">
    <property type="entry name" value="Ribosomal_uL5_N"/>
</dbReference>
<dbReference type="NCBIfam" id="NF000585">
    <property type="entry name" value="PRK00010.1"/>
    <property type="match status" value="1"/>
</dbReference>
<dbReference type="PANTHER" id="PTHR11994">
    <property type="entry name" value="60S RIBOSOMAL PROTEIN L11-RELATED"/>
    <property type="match status" value="1"/>
</dbReference>
<dbReference type="Pfam" id="PF00281">
    <property type="entry name" value="Ribosomal_L5"/>
    <property type="match status" value="1"/>
</dbReference>
<dbReference type="Pfam" id="PF00673">
    <property type="entry name" value="Ribosomal_L5_C"/>
    <property type="match status" value="1"/>
</dbReference>
<dbReference type="PIRSF" id="PIRSF002161">
    <property type="entry name" value="Ribosomal_L5"/>
    <property type="match status" value="1"/>
</dbReference>
<dbReference type="SUPFAM" id="SSF55282">
    <property type="entry name" value="RL5-like"/>
    <property type="match status" value="1"/>
</dbReference>
<dbReference type="PROSITE" id="PS00358">
    <property type="entry name" value="RIBOSOMAL_L5"/>
    <property type="match status" value="1"/>
</dbReference>
<protein>
    <recommendedName>
        <fullName evidence="1">Large ribosomal subunit protein uL5</fullName>
    </recommendedName>
    <alternativeName>
        <fullName evidence="2">50S ribosomal protein L5</fullName>
    </alternativeName>
</protein>
<accession>Q6F1Y2</accession>
<comment type="function">
    <text evidence="1">This is one of the proteins that bind and probably mediate the attachment of the 5S RNA into the large ribosomal subunit, where it forms part of the central protuberance. In the 70S ribosome it contacts protein S13 of the 30S subunit (bridge B1b), connecting the 2 subunits; this bridge is implicated in subunit movement. Contacts the P site tRNA; the 5S rRNA and some of its associated proteins might help stabilize positioning of ribosome-bound tRNAs.</text>
</comment>
<comment type="subunit">
    <text evidence="1">Part of the 50S ribosomal subunit; part of the 5S rRNA/L5/L18/L25 subcomplex. Contacts the 5S rRNA and the P site tRNA. Forms a bridge to the 30S subunit in the 70S ribosome.</text>
</comment>
<comment type="similarity">
    <text evidence="1">Belongs to the universal ribosomal protein uL5 family.</text>
</comment>
<keyword id="KW-1185">Reference proteome</keyword>
<keyword id="KW-0687">Ribonucleoprotein</keyword>
<keyword id="KW-0689">Ribosomal protein</keyword>
<keyword id="KW-0694">RNA-binding</keyword>
<keyword id="KW-0699">rRNA-binding</keyword>
<keyword id="KW-0820">tRNA-binding</keyword>
<evidence type="ECO:0000255" key="1">
    <source>
        <dbReference type="HAMAP-Rule" id="MF_01333"/>
    </source>
</evidence>
<evidence type="ECO:0000305" key="2"/>
<reference key="1">
    <citation type="submission" date="2004-06" db="EMBL/GenBank/DDBJ databases">
        <authorList>
            <person name="Birren B.W."/>
            <person name="Stange-Thomann N."/>
            <person name="Hafez N."/>
            <person name="DeCaprio D."/>
            <person name="Fisher S."/>
            <person name="Butler J."/>
            <person name="Elkins T."/>
            <person name="Kodira C.D."/>
            <person name="Major J."/>
            <person name="Wang S."/>
            <person name="Nicol R."/>
            <person name="Nusbaum C."/>
        </authorList>
    </citation>
    <scope>NUCLEOTIDE SEQUENCE [LARGE SCALE GENOMIC DNA]</scope>
    <source>
        <strain>ATCC 33453 / NBRC 100688 / NCTC 11704 / L1</strain>
    </source>
</reference>
<gene>
    <name evidence="1" type="primary">rplE</name>
    <name type="ordered locus">Mfl135</name>
</gene>
<feature type="chain" id="PRO_0000243019" description="Large ribosomal subunit protein uL5">
    <location>
        <begin position="1"/>
        <end position="180"/>
    </location>
</feature>
<organism>
    <name type="scientific">Mesoplasma florum (strain ATCC 33453 / NBRC 100688 / NCTC 11704 / L1)</name>
    <name type="common">Acholeplasma florum</name>
    <dbReference type="NCBI Taxonomy" id="265311"/>
    <lineage>
        <taxon>Bacteria</taxon>
        <taxon>Bacillati</taxon>
        <taxon>Mycoplasmatota</taxon>
        <taxon>Mollicutes</taxon>
        <taxon>Entomoplasmatales</taxon>
        <taxon>Entomoplasmataceae</taxon>
        <taxon>Mesoplasma</taxon>
    </lineage>
</organism>
<sequence>MKSRLETRYTEQIAPELFKELGYKSVMQVPKLTKIVINMGVGEATTDPKKLDAAVVELEQLTGQKPLVTKAKKSLAVFKLREGMPIGTKVTLRGKKMYDFLDRLTNVALPRVRDFRGVPKTSFDGFGNYTMGIKEQIIFPEIDYDKVQKLRGMDITIVTTAKTNEEAYKLLEKFGMPFAK</sequence>
<proteinExistence type="inferred from homology"/>